<accession>A9M061</accession>
<sequence length="384" mass="42110">MKFIDEAKIEVAAGKGGNGATSFRREKFVPRGGPDGGDGGKGGSVWAEADENTNTLVEYRFVKRYQAKNGEKGHGSDRYGAGADDIVLKMPVGTLIRDLDTDEIVADLTYHGQRVCLAKGGKGGLGHIHFKSSVNRAPKQSTPGEEGETRSLQLELKVLADVGLLGMPNAGKSTLITAVSAARPKIANYPFTTLHPNLGVVRIDENHSFVMADIPGLIEGAAEGAGLGHRFLKHLSRTGLLLHVVDLAPFDEAVDPAEEALAIINELRKYDEELYGKPRWLVLNKLDMLDEEEAQERTVTFLEAVGWDYPKPDDRFQFDMETPRLFQISALTHQGTQELVHQINQYLTEKKRLEAEKAEAEKAAANVEIIEQQPKTDTGVFKPE</sequence>
<gene>
    <name evidence="1" type="primary">obg</name>
    <name type="ordered locus">NMCC_0100</name>
</gene>
<protein>
    <recommendedName>
        <fullName evidence="1">GTPase Obg</fullName>
        <ecNumber evidence="1">3.6.5.-</ecNumber>
    </recommendedName>
    <alternativeName>
        <fullName evidence="1">GTP-binding protein Obg</fullName>
    </alternativeName>
</protein>
<feature type="chain" id="PRO_0000386085" description="GTPase Obg">
    <location>
        <begin position="1"/>
        <end position="384"/>
    </location>
</feature>
<feature type="domain" description="Obg" evidence="2">
    <location>
        <begin position="1"/>
        <end position="159"/>
    </location>
</feature>
<feature type="domain" description="OBG-type G" evidence="1">
    <location>
        <begin position="160"/>
        <end position="348"/>
    </location>
</feature>
<feature type="region of interest" description="Disordered" evidence="3">
    <location>
        <begin position="20"/>
        <end position="46"/>
    </location>
</feature>
<feature type="compositionally biased region" description="Gly residues" evidence="3">
    <location>
        <begin position="33"/>
        <end position="43"/>
    </location>
</feature>
<feature type="binding site" evidence="1">
    <location>
        <begin position="166"/>
        <end position="173"/>
    </location>
    <ligand>
        <name>GTP</name>
        <dbReference type="ChEBI" id="CHEBI:37565"/>
    </ligand>
</feature>
<feature type="binding site" evidence="1">
    <location>
        <position position="173"/>
    </location>
    <ligand>
        <name>Mg(2+)</name>
        <dbReference type="ChEBI" id="CHEBI:18420"/>
    </ligand>
</feature>
<feature type="binding site" evidence="1">
    <location>
        <begin position="191"/>
        <end position="195"/>
    </location>
    <ligand>
        <name>GTP</name>
        <dbReference type="ChEBI" id="CHEBI:37565"/>
    </ligand>
</feature>
<feature type="binding site" evidence="1">
    <location>
        <position position="193"/>
    </location>
    <ligand>
        <name>Mg(2+)</name>
        <dbReference type="ChEBI" id="CHEBI:18420"/>
    </ligand>
</feature>
<feature type="binding site" evidence="1">
    <location>
        <begin position="213"/>
        <end position="216"/>
    </location>
    <ligand>
        <name>GTP</name>
        <dbReference type="ChEBI" id="CHEBI:37565"/>
    </ligand>
</feature>
<feature type="binding site" evidence="1">
    <location>
        <begin position="284"/>
        <end position="287"/>
    </location>
    <ligand>
        <name>GTP</name>
        <dbReference type="ChEBI" id="CHEBI:37565"/>
    </ligand>
</feature>
<feature type="binding site" evidence="1">
    <location>
        <begin position="329"/>
        <end position="331"/>
    </location>
    <ligand>
        <name>GTP</name>
        <dbReference type="ChEBI" id="CHEBI:37565"/>
    </ligand>
</feature>
<keyword id="KW-0963">Cytoplasm</keyword>
<keyword id="KW-0342">GTP-binding</keyword>
<keyword id="KW-0378">Hydrolase</keyword>
<keyword id="KW-0460">Magnesium</keyword>
<keyword id="KW-0479">Metal-binding</keyword>
<keyword id="KW-0547">Nucleotide-binding</keyword>
<proteinExistence type="inferred from homology"/>
<reference key="1">
    <citation type="journal article" date="2008" name="Genomics">
        <title>Characterization of ST-4821 complex, a unique Neisseria meningitidis clone.</title>
        <authorList>
            <person name="Peng J."/>
            <person name="Yang L."/>
            <person name="Yang F."/>
            <person name="Yang J."/>
            <person name="Yan Y."/>
            <person name="Nie H."/>
            <person name="Zhang X."/>
            <person name="Xiong Z."/>
            <person name="Jiang Y."/>
            <person name="Cheng F."/>
            <person name="Xu X."/>
            <person name="Chen S."/>
            <person name="Sun L."/>
            <person name="Li W."/>
            <person name="Shen Y."/>
            <person name="Shao Z."/>
            <person name="Liang X."/>
            <person name="Xu J."/>
            <person name="Jin Q."/>
        </authorList>
    </citation>
    <scope>NUCLEOTIDE SEQUENCE [LARGE SCALE GENOMIC DNA]</scope>
    <source>
        <strain>053442</strain>
    </source>
</reference>
<organism>
    <name type="scientific">Neisseria meningitidis serogroup C (strain 053442)</name>
    <dbReference type="NCBI Taxonomy" id="374833"/>
    <lineage>
        <taxon>Bacteria</taxon>
        <taxon>Pseudomonadati</taxon>
        <taxon>Pseudomonadota</taxon>
        <taxon>Betaproteobacteria</taxon>
        <taxon>Neisseriales</taxon>
        <taxon>Neisseriaceae</taxon>
        <taxon>Neisseria</taxon>
    </lineage>
</organism>
<comment type="function">
    <text evidence="1">An essential GTPase which binds GTP, GDP and possibly (p)ppGpp with moderate affinity, with high nucleotide exchange rates and a fairly low GTP hydrolysis rate. Plays a role in control of the cell cycle, stress response, ribosome biogenesis and in those bacteria that undergo differentiation, in morphogenesis control.</text>
</comment>
<comment type="cofactor">
    <cofactor evidence="1">
        <name>Mg(2+)</name>
        <dbReference type="ChEBI" id="CHEBI:18420"/>
    </cofactor>
</comment>
<comment type="subunit">
    <text evidence="1">Monomer.</text>
</comment>
<comment type="subcellular location">
    <subcellularLocation>
        <location evidence="1">Cytoplasm</location>
    </subcellularLocation>
</comment>
<comment type="similarity">
    <text evidence="1">Belongs to the TRAFAC class OBG-HflX-like GTPase superfamily. OBG GTPase family.</text>
</comment>
<name>OBG_NEIM0</name>
<dbReference type="EC" id="3.6.5.-" evidence="1"/>
<dbReference type="EMBL" id="CP000381">
    <property type="protein sequence ID" value="ABX72322.1"/>
    <property type="molecule type" value="Genomic_DNA"/>
</dbReference>
<dbReference type="RefSeq" id="WP_012221141.1">
    <property type="nucleotide sequence ID" value="NC_010120.1"/>
</dbReference>
<dbReference type="SMR" id="A9M061"/>
<dbReference type="KEGG" id="nmn:NMCC_0100"/>
<dbReference type="HOGENOM" id="CLU_011747_2_0_4"/>
<dbReference type="Proteomes" id="UP000001177">
    <property type="component" value="Chromosome"/>
</dbReference>
<dbReference type="GO" id="GO:0005737">
    <property type="term" value="C:cytoplasm"/>
    <property type="evidence" value="ECO:0007669"/>
    <property type="project" value="UniProtKB-SubCell"/>
</dbReference>
<dbReference type="GO" id="GO:0005525">
    <property type="term" value="F:GTP binding"/>
    <property type="evidence" value="ECO:0007669"/>
    <property type="project" value="UniProtKB-UniRule"/>
</dbReference>
<dbReference type="GO" id="GO:0003924">
    <property type="term" value="F:GTPase activity"/>
    <property type="evidence" value="ECO:0007669"/>
    <property type="project" value="UniProtKB-UniRule"/>
</dbReference>
<dbReference type="GO" id="GO:0000287">
    <property type="term" value="F:magnesium ion binding"/>
    <property type="evidence" value="ECO:0007669"/>
    <property type="project" value="InterPro"/>
</dbReference>
<dbReference type="GO" id="GO:0042254">
    <property type="term" value="P:ribosome biogenesis"/>
    <property type="evidence" value="ECO:0007669"/>
    <property type="project" value="UniProtKB-UniRule"/>
</dbReference>
<dbReference type="CDD" id="cd01898">
    <property type="entry name" value="Obg"/>
    <property type="match status" value="1"/>
</dbReference>
<dbReference type="FunFam" id="2.70.210.12:FF:000001">
    <property type="entry name" value="GTPase Obg"/>
    <property type="match status" value="1"/>
</dbReference>
<dbReference type="FunFam" id="3.40.50.300:FF:000185">
    <property type="entry name" value="GTPase Obg"/>
    <property type="match status" value="1"/>
</dbReference>
<dbReference type="Gene3D" id="2.70.210.12">
    <property type="entry name" value="GTP1/OBG domain"/>
    <property type="match status" value="1"/>
</dbReference>
<dbReference type="Gene3D" id="3.40.50.300">
    <property type="entry name" value="P-loop containing nucleotide triphosphate hydrolases"/>
    <property type="match status" value="1"/>
</dbReference>
<dbReference type="HAMAP" id="MF_01454">
    <property type="entry name" value="GTPase_Obg"/>
    <property type="match status" value="1"/>
</dbReference>
<dbReference type="InterPro" id="IPR031167">
    <property type="entry name" value="G_OBG"/>
</dbReference>
<dbReference type="InterPro" id="IPR006073">
    <property type="entry name" value="GTP-bd"/>
</dbReference>
<dbReference type="InterPro" id="IPR014100">
    <property type="entry name" value="GTP-bd_Obg/CgtA"/>
</dbReference>
<dbReference type="InterPro" id="IPR006074">
    <property type="entry name" value="GTP1-OBG_CS"/>
</dbReference>
<dbReference type="InterPro" id="IPR006169">
    <property type="entry name" value="GTP1_OBG_dom"/>
</dbReference>
<dbReference type="InterPro" id="IPR036726">
    <property type="entry name" value="GTP1_OBG_dom_sf"/>
</dbReference>
<dbReference type="InterPro" id="IPR045086">
    <property type="entry name" value="OBG_GTPase"/>
</dbReference>
<dbReference type="InterPro" id="IPR027417">
    <property type="entry name" value="P-loop_NTPase"/>
</dbReference>
<dbReference type="NCBIfam" id="TIGR02729">
    <property type="entry name" value="Obg_CgtA"/>
    <property type="match status" value="1"/>
</dbReference>
<dbReference type="NCBIfam" id="NF008955">
    <property type="entry name" value="PRK12297.1"/>
    <property type="match status" value="1"/>
</dbReference>
<dbReference type="NCBIfam" id="NF008956">
    <property type="entry name" value="PRK12299.1"/>
    <property type="match status" value="1"/>
</dbReference>
<dbReference type="PANTHER" id="PTHR11702">
    <property type="entry name" value="DEVELOPMENTALLY REGULATED GTP-BINDING PROTEIN-RELATED"/>
    <property type="match status" value="1"/>
</dbReference>
<dbReference type="PANTHER" id="PTHR11702:SF31">
    <property type="entry name" value="MITOCHONDRIAL RIBOSOME-ASSOCIATED GTPASE 2"/>
    <property type="match status" value="1"/>
</dbReference>
<dbReference type="Pfam" id="PF01018">
    <property type="entry name" value="GTP1_OBG"/>
    <property type="match status" value="1"/>
</dbReference>
<dbReference type="Pfam" id="PF01926">
    <property type="entry name" value="MMR_HSR1"/>
    <property type="match status" value="1"/>
</dbReference>
<dbReference type="PIRSF" id="PIRSF002401">
    <property type="entry name" value="GTP_bd_Obg/CgtA"/>
    <property type="match status" value="1"/>
</dbReference>
<dbReference type="PRINTS" id="PR00326">
    <property type="entry name" value="GTP1OBG"/>
</dbReference>
<dbReference type="SUPFAM" id="SSF82051">
    <property type="entry name" value="Obg GTP-binding protein N-terminal domain"/>
    <property type="match status" value="1"/>
</dbReference>
<dbReference type="SUPFAM" id="SSF52540">
    <property type="entry name" value="P-loop containing nucleoside triphosphate hydrolases"/>
    <property type="match status" value="1"/>
</dbReference>
<dbReference type="PROSITE" id="PS51710">
    <property type="entry name" value="G_OBG"/>
    <property type="match status" value="1"/>
</dbReference>
<dbReference type="PROSITE" id="PS00905">
    <property type="entry name" value="GTP1_OBG"/>
    <property type="match status" value="1"/>
</dbReference>
<dbReference type="PROSITE" id="PS51883">
    <property type="entry name" value="OBG"/>
    <property type="match status" value="1"/>
</dbReference>
<evidence type="ECO:0000255" key="1">
    <source>
        <dbReference type="HAMAP-Rule" id="MF_01454"/>
    </source>
</evidence>
<evidence type="ECO:0000255" key="2">
    <source>
        <dbReference type="PROSITE-ProRule" id="PRU01231"/>
    </source>
</evidence>
<evidence type="ECO:0000256" key="3">
    <source>
        <dbReference type="SAM" id="MobiDB-lite"/>
    </source>
</evidence>